<comment type="catalytic activity">
    <reaction evidence="1">
        <text>5-amino-1-(5-phospho-D-ribosyl)imidazole-4-carboxylate + L-aspartate + ATP = (2S)-2-[5-amino-1-(5-phospho-beta-D-ribosyl)imidazole-4-carboxamido]succinate + ADP + phosphate + 2 H(+)</text>
        <dbReference type="Rhea" id="RHEA:22628"/>
        <dbReference type="ChEBI" id="CHEBI:15378"/>
        <dbReference type="ChEBI" id="CHEBI:29991"/>
        <dbReference type="ChEBI" id="CHEBI:30616"/>
        <dbReference type="ChEBI" id="CHEBI:43474"/>
        <dbReference type="ChEBI" id="CHEBI:58443"/>
        <dbReference type="ChEBI" id="CHEBI:77657"/>
        <dbReference type="ChEBI" id="CHEBI:456216"/>
        <dbReference type="EC" id="6.3.2.6"/>
    </reaction>
</comment>
<comment type="pathway">
    <text evidence="1">Purine metabolism; IMP biosynthesis via de novo pathway; 5-amino-1-(5-phospho-D-ribosyl)imidazole-4-carboxamide from 5-amino-1-(5-phospho-D-ribosyl)imidazole-4-carboxylate: step 1/2.</text>
</comment>
<comment type="similarity">
    <text evidence="1">Belongs to the SAICAR synthetase family.</text>
</comment>
<name>PUR7_CHLL2</name>
<dbReference type="EC" id="6.3.2.6" evidence="1"/>
<dbReference type="EMBL" id="CP001097">
    <property type="protein sequence ID" value="ACD90250.1"/>
    <property type="molecule type" value="Genomic_DNA"/>
</dbReference>
<dbReference type="RefSeq" id="WP_012466127.1">
    <property type="nucleotide sequence ID" value="NC_010803.1"/>
</dbReference>
<dbReference type="SMR" id="B3ECH5"/>
<dbReference type="STRING" id="290315.Clim_1182"/>
<dbReference type="KEGG" id="cli:Clim_1182"/>
<dbReference type="eggNOG" id="COG0152">
    <property type="taxonomic scope" value="Bacteria"/>
</dbReference>
<dbReference type="HOGENOM" id="CLU_061495_2_0_10"/>
<dbReference type="OrthoDB" id="9801549at2"/>
<dbReference type="UniPathway" id="UPA00074">
    <property type="reaction ID" value="UER00131"/>
</dbReference>
<dbReference type="Proteomes" id="UP000008841">
    <property type="component" value="Chromosome"/>
</dbReference>
<dbReference type="GO" id="GO:0005524">
    <property type="term" value="F:ATP binding"/>
    <property type="evidence" value="ECO:0007669"/>
    <property type="project" value="UniProtKB-KW"/>
</dbReference>
<dbReference type="GO" id="GO:0004639">
    <property type="term" value="F:phosphoribosylaminoimidazolesuccinocarboxamide synthase activity"/>
    <property type="evidence" value="ECO:0007669"/>
    <property type="project" value="UniProtKB-UniRule"/>
</dbReference>
<dbReference type="GO" id="GO:0006189">
    <property type="term" value="P:'de novo' IMP biosynthetic process"/>
    <property type="evidence" value="ECO:0007669"/>
    <property type="project" value="UniProtKB-UniRule"/>
</dbReference>
<dbReference type="GO" id="GO:0009236">
    <property type="term" value="P:cobalamin biosynthetic process"/>
    <property type="evidence" value="ECO:0007669"/>
    <property type="project" value="InterPro"/>
</dbReference>
<dbReference type="CDD" id="cd01415">
    <property type="entry name" value="SAICAR_synt_PurC"/>
    <property type="match status" value="1"/>
</dbReference>
<dbReference type="FunFam" id="3.30.470.20:FF:000006">
    <property type="entry name" value="Phosphoribosylaminoimidazole-succinocarboxamide synthase"/>
    <property type="match status" value="1"/>
</dbReference>
<dbReference type="Gene3D" id="3.30.470.20">
    <property type="entry name" value="ATP-grasp fold, B domain"/>
    <property type="match status" value="1"/>
</dbReference>
<dbReference type="Gene3D" id="3.30.200.20">
    <property type="entry name" value="Phosphorylase Kinase, domain 1"/>
    <property type="match status" value="1"/>
</dbReference>
<dbReference type="HAMAP" id="MF_00137">
    <property type="entry name" value="SAICAR_synth"/>
    <property type="match status" value="1"/>
</dbReference>
<dbReference type="InterPro" id="IPR028923">
    <property type="entry name" value="SAICAR_synt/ADE2_N"/>
</dbReference>
<dbReference type="InterPro" id="IPR033934">
    <property type="entry name" value="SAICAR_synt_PurC"/>
</dbReference>
<dbReference type="InterPro" id="IPR001636">
    <property type="entry name" value="SAICAR_synth"/>
</dbReference>
<dbReference type="InterPro" id="IPR050089">
    <property type="entry name" value="SAICAR_synthetase"/>
</dbReference>
<dbReference type="InterPro" id="IPR018236">
    <property type="entry name" value="SAICAR_synthetase_CS"/>
</dbReference>
<dbReference type="NCBIfam" id="TIGR00081">
    <property type="entry name" value="purC"/>
    <property type="match status" value="1"/>
</dbReference>
<dbReference type="PANTHER" id="PTHR43599">
    <property type="entry name" value="MULTIFUNCTIONAL PROTEIN ADE2"/>
    <property type="match status" value="1"/>
</dbReference>
<dbReference type="PANTHER" id="PTHR43599:SF3">
    <property type="entry name" value="SI:DKEY-6E2.2"/>
    <property type="match status" value="1"/>
</dbReference>
<dbReference type="Pfam" id="PF01259">
    <property type="entry name" value="SAICAR_synt"/>
    <property type="match status" value="1"/>
</dbReference>
<dbReference type="SUPFAM" id="SSF56104">
    <property type="entry name" value="SAICAR synthase-like"/>
    <property type="match status" value="1"/>
</dbReference>
<dbReference type="PROSITE" id="PS01057">
    <property type="entry name" value="SAICAR_SYNTHETASE_1"/>
    <property type="match status" value="1"/>
</dbReference>
<dbReference type="PROSITE" id="PS01058">
    <property type="entry name" value="SAICAR_SYNTHETASE_2"/>
    <property type="match status" value="1"/>
</dbReference>
<keyword id="KW-0067">ATP-binding</keyword>
<keyword id="KW-0436">Ligase</keyword>
<keyword id="KW-0547">Nucleotide-binding</keyword>
<keyword id="KW-0658">Purine biosynthesis</keyword>
<feature type="chain" id="PRO_1000095969" description="Phosphoribosylaminoimidazole-succinocarboxamide synthase">
    <location>
        <begin position="1"/>
        <end position="236"/>
    </location>
</feature>
<gene>
    <name evidence="1" type="primary">purC</name>
    <name type="ordered locus">Clim_1182</name>
</gene>
<organism>
    <name type="scientific">Chlorobium limicola (strain DSM 245 / NBRC 103803 / 6330)</name>
    <dbReference type="NCBI Taxonomy" id="290315"/>
    <lineage>
        <taxon>Bacteria</taxon>
        <taxon>Pseudomonadati</taxon>
        <taxon>Chlorobiota</taxon>
        <taxon>Chlorobiia</taxon>
        <taxon>Chlorobiales</taxon>
        <taxon>Chlorobiaceae</taxon>
        <taxon>Chlorobium/Pelodictyon group</taxon>
        <taxon>Chlorobium</taxon>
    </lineage>
</organism>
<evidence type="ECO:0000255" key="1">
    <source>
        <dbReference type="HAMAP-Rule" id="MF_00137"/>
    </source>
</evidence>
<protein>
    <recommendedName>
        <fullName evidence="1">Phosphoribosylaminoimidazole-succinocarboxamide synthase</fullName>
        <ecNumber evidence="1">6.3.2.6</ecNumber>
    </recommendedName>
    <alternativeName>
        <fullName evidence="1">SAICAR synthetase</fullName>
    </alternativeName>
</protein>
<proteinExistence type="inferred from homology"/>
<reference key="1">
    <citation type="submission" date="2008-05" db="EMBL/GenBank/DDBJ databases">
        <title>Complete sequence of Chlorobium limicola DSM 245.</title>
        <authorList>
            <consortium name="US DOE Joint Genome Institute"/>
            <person name="Lucas S."/>
            <person name="Copeland A."/>
            <person name="Lapidus A."/>
            <person name="Glavina del Rio T."/>
            <person name="Dalin E."/>
            <person name="Tice H."/>
            <person name="Bruce D."/>
            <person name="Goodwin L."/>
            <person name="Pitluck S."/>
            <person name="Schmutz J."/>
            <person name="Larimer F."/>
            <person name="Land M."/>
            <person name="Hauser L."/>
            <person name="Kyrpides N."/>
            <person name="Ovchinnikova G."/>
            <person name="Zhao F."/>
            <person name="Li T."/>
            <person name="Liu Z."/>
            <person name="Overmann J."/>
            <person name="Bryant D.A."/>
            <person name="Richardson P."/>
        </authorList>
    </citation>
    <scope>NUCLEOTIDE SEQUENCE [LARGE SCALE GENOMIC DNA]</scope>
    <source>
        <strain>DSM 245 / NBRC 103803 / 6330</strain>
    </source>
</reference>
<sequence>MQKTTLLHEGKAKKVFLTGDSDLVIQEFKDDATAFNNKKKGTIADKGVVNNAISCKLFTMLESHGVKTHLVEKLSERDMLCRRLDIIKVEVVVRNIAAGSLVKRYGFAEGTVLDKPIVEFYLKDDDLDDPLMNESHAVALGVATLEELSVLRDRAEAINVVLKEFFAQRKLKLVDFKLEFGRYHNEILLGDEISPDTCRFWDLDTNEKMDKDRFRFDLGGVEDAYGEVQRRVLEQD</sequence>
<accession>B3ECH5</accession>